<sequence>MEPFIKHKGLVAPLDRANVDTDAIIPKQFLKSIRRTGFGPFLFDEWRYLDEGQPDMDCSQRPVNPDFVLNQARYQGASILLTRRNFGCGSSREHAPWALKDFGFRAIIAPSFADIFYNNCFKNGLLPLVLTEAQVDRLFKEVEAAPGYELEIDLPEQQVRTPAGEAFEFEIDGFRKHALLEGLDEIGLTLQHAEDIRAYEARRREQAPWLFTDLEEGR</sequence>
<evidence type="ECO:0000255" key="1">
    <source>
        <dbReference type="HAMAP-Rule" id="MF_01031"/>
    </source>
</evidence>
<feature type="chain" id="PRO_1000063727" description="3-isopropylmalate dehydratase small subunit">
    <location>
        <begin position="1"/>
        <end position="218"/>
    </location>
</feature>
<dbReference type="EC" id="4.2.1.33" evidence="1"/>
<dbReference type="EMBL" id="CP000453">
    <property type="protein sequence ID" value="ABI56578.1"/>
    <property type="molecule type" value="Genomic_DNA"/>
</dbReference>
<dbReference type="RefSeq" id="WP_011628973.1">
    <property type="nucleotide sequence ID" value="NC_008340.1"/>
</dbReference>
<dbReference type="SMR" id="Q0A9A9"/>
<dbReference type="KEGG" id="aeh:Mlg_1229"/>
<dbReference type="eggNOG" id="COG0066">
    <property type="taxonomic scope" value="Bacteria"/>
</dbReference>
<dbReference type="HOGENOM" id="CLU_081378_0_3_6"/>
<dbReference type="OrthoDB" id="9777465at2"/>
<dbReference type="UniPathway" id="UPA00048">
    <property type="reaction ID" value="UER00071"/>
</dbReference>
<dbReference type="Proteomes" id="UP000001962">
    <property type="component" value="Chromosome"/>
</dbReference>
<dbReference type="GO" id="GO:0009316">
    <property type="term" value="C:3-isopropylmalate dehydratase complex"/>
    <property type="evidence" value="ECO:0007669"/>
    <property type="project" value="InterPro"/>
</dbReference>
<dbReference type="GO" id="GO:0003861">
    <property type="term" value="F:3-isopropylmalate dehydratase activity"/>
    <property type="evidence" value="ECO:0007669"/>
    <property type="project" value="UniProtKB-UniRule"/>
</dbReference>
<dbReference type="GO" id="GO:0009098">
    <property type="term" value="P:L-leucine biosynthetic process"/>
    <property type="evidence" value="ECO:0007669"/>
    <property type="project" value="UniProtKB-UniRule"/>
</dbReference>
<dbReference type="CDD" id="cd01577">
    <property type="entry name" value="IPMI_Swivel"/>
    <property type="match status" value="1"/>
</dbReference>
<dbReference type="FunFam" id="3.20.19.10:FF:000003">
    <property type="entry name" value="3-isopropylmalate dehydratase small subunit"/>
    <property type="match status" value="1"/>
</dbReference>
<dbReference type="Gene3D" id="3.20.19.10">
    <property type="entry name" value="Aconitase, domain 4"/>
    <property type="match status" value="1"/>
</dbReference>
<dbReference type="HAMAP" id="MF_01031">
    <property type="entry name" value="LeuD_type1"/>
    <property type="match status" value="1"/>
</dbReference>
<dbReference type="InterPro" id="IPR004431">
    <property type="entry name" value="3-IsopropMal_deHydase_ssu"/>
</dbReference>
<dbReference type="InterPro" id="IPR015928">
    <property type="entry name" value="Aconitase/3IPM_dehydase_swvl"/>
</dbReference>
<dbReference type="InterPro" id="IPR000573">
    <property type="entry name" value="AconitaseA/IPMdHydase_ssu_swvl"/>
</dbReference>
<dbReference type="InterPro" id="IPR033940">
    <property type="entry name" value="IPMI_Swivel"/>
</dbReference>
<dbReference type="InterPro" id="IPR050075">
    <property type="entry name" value="LeuD"/>
</dbReference>
<dbReference type="NCBIfam" id="TIGR00171">
    <property type="entry name" value="leuD"/>
    <property type="match status" value="1"/>
</dbReference>
<dbReference type="NCBIfam" id="NF002458">
    <property type="entry name" value="PRK01641.1"/>
    <property type="match status" value="1"/>
</dbReference>
<dbReference type="PANTHER" id="PTHR43345:SF5">
    <property type="entry name" value="3-ISOPROPYLMALATE DEHYDRATASE SMALL SUBUNIT"/>
    <property type="match status" value="1"/>
</dbReference>
<dbReference type="PANTHER" id="PTHR43345">
    <property type="entry name" value="3-ISOPROPYLMALATE DEHYDRATASE SMALL SUBUNIT 2-RELATED-RELATED"/>
    <property type="match status" value="1"/>
</dbReference>
<dbReference type="Pfam" id="PF00694">
    <property type="entry name" value="Aconitase_C"/>
    <property type="match status" value="1"/>
</dbReference>
<dbReference type="SUPFAM" id="SSF52016">
    <property type="entry name" value="LeuD/IlvD-like"/>
    <property type="match status" value="1"/>
</dbReference>
<comment type="function">
    <text evidence="1">Catalyzes the isomerization between 2-isopropylmalate and 3-isopropylmalate, via the formation of 2-isopropylmaleate.</text>
</comment>
<comment type="catalytic activity">
    <reaction evidence="1">
        <text>(2R,3S)-3-isopropylmalate = (2S)-2-isopropylmalate</text>
        <dbReference type="Rhea" id="RHEA:32287"/>
        <dbReference type="ChEBI" id="CHEBI:1178"/>
        <dbReference type="ChEBI" id="CHEBI:35121"/>
        <dbReference type="EC" id="4.2.1.33"/>
    </reaction>
</comment>
<comment type="pathway">
    <text evidence="1">Amino-acid biosynthesis; L-leucine biosynthesis; L-leucine from 3-methyl-2-oxobutanoate: step 2/4.</text>
</comment>
<comment type="subunit">
    <text evidence="1">Heterodimer of LeuC and LeuD.</text>
</comment>
<comment type="similarity">
    <text evidence="1">Belongs to the LeuD family. LeuD type 1 subfamily.</text>
</comment>
<organism>
    <name type="scientific">Alkalilimnicola ehrlichii (strain ATCC BAA-1101 / DSM 17681 / MLHE-1)</name>
    <dbReference type="NCBI Taxonomy" id="187272"/>
    <lineage>
        <taxon>Bacteria</taxon>
        <taxon>Pseudomonadati</taxon>
        <taxon>Pseudomonadota</taxon>
        <taxon>Gammaproteobacteria</taxon>
        <taxon>Chromatiales</taxon>
        <taxon>Ectothiorhodospiraceae</taxon>
        <taxon>Alkalilimnicola</taxon>
    </lineage>
</organism>
<protein>
    <recommendedName>
        <fullName evidence="1">3-isopropylmalate dehydratase small subunit</fullName>
        <ecNumber evidence="1">4.2.1.33</ecNumber>
    </recommendedName>
    <alternativeName>
        <fullName evidence="1">Alpha-IPM isomerase</fullName>
        <shortName evidence="1">IPMI</shortName>
    </alternativeName>
    <alternativeName>
        <fullName evidence="1">Isopropylmalate isomerase</fullName>
    </alternativeName>
</protein>
<accession>Q0A9A9</accession>
<reference key="1">
    <citation type="submission" date="2006-08" db="EMBL/GenBank/DDBJ databases">
        <title>Complete sequence of Alkalilimnicola ehrilichei MLHE-1.</title>
        <authorList>
            <person name="Copeland A."/>
            <person name="Lucas S."/>
            <person name="Lapidus A."/>
            <person name="Barry K."/>
            <person name="Detter J.C."/>
            <person name="Glavina del Rio T."/>
            <person name="Hammon N."/>
            <person name="Israni S."/>
            <person name="Dalin E."/>
            <person name="Tice H."/>
            <person name="Pitluck S."/>
            <person name="Sims D."/>
            <person name="Brettin T."/>
            <person name="Bruce D."/>
            <person name="Han C."/>
            <person name="Tapia R."/>
            <person name="Gilna P."/>
            <person name="Schmutz J."/>
            <person name="Larimer F."/>
            <person name="Land M."/>
            <person name="Hauser L."/>
            <person name="Kyrpides N."/>
            <person name="Mikhailova N."/>
            <person name="Oremland R.S."/>
            <person name="Hoeft S.E."/>
            <person name="Switzer-Blum J."/>
            <person name="Kulp T."/>
            <person name="King G."/>
            <person name="Tabita R."/>
            <person name="Witte B."/>
            <person name="Santini J.M."/>
            <person name="Basu P."/>
            <person name="Hollibaugh J.T."/>
            <person name="Xie G."/>
            <person name="Stolz J.F."/>
            <person name="Richardson P."/>
        </authorList>
    </citation>
    <scope>NUCLEOTIDE SEQUENCE [LARGE SCALE GENOMIC DNA]</scope>
    <source>
        <strain>ATCC BAA-1101 / DSM 17681 / MLHE-1</strain>
    </source>
</reference>
<name>LEUD_ALKEH</name>
<keyword id="KW-0028">Amino-acid biosynthesis</keyword>
<keyword id="KW-0100">Branched-chain amino acid biosynthesis</keyword>
<keyword id="KW-0432">Leucine biosynthesis</keyword>
<keyword id="KW-0456">Lyase</keyword>
<keyword id="KW-1185">Reference proteome</keyword>
<proteinExistence type="inferred from homology"/>
<gene>
    <name evidence="1" type="primary">leuD</name>
    <name type="ordered locus">Mlg_1229</name>
</gene>